<reference key="1">
    <citation type="submission" date="2007-08" db="EMBL/GenBank/DDBJ databases">
        <authorList>
            <consortium name="The Vibrio harveyi Genome Sequencing Project"/>
            <person name="Bassler B."/>
            <person name="Clifton S.W."/>
            <person name="Fulton L."/>
            <person name="Delehaunty K."/>
            <person name="Fronick C."/>
            <person name="Harrison M."/>
            <person name="Markivic C."/>
            <person name="Fulton R."/>
            <person name="Tin-Wollam A.-M."/>
            <person name="Shah N."/>
            <person name="Pepin K."/>
            <person name="Nash W."/>
            <person name="Thiruvilangam P."/>
            <person name="Bhonagiri V."/>
            <person name="Waters C."/>
            <person name="Tu K.C."/>
            <person name="Irgon J."/>
            <person name="Wilson R.K."/>
        </authorList>
    </citation>
    <scope>NUCLEOTIDE SEQUENCE [LARGE SCALE GENOMIC DNA]</scope>
    <source>
        <strain>ATCC BAA-1116 / BB120</strain>
    </source>
</reference>
<gene>
    <name evidence="1" type="primary">lolA</name>
    <name type="ordered locus">VIBHAR_01798</name>
</gene>
<evidence type="ECO:0000255" key="1">
    <source>
        <dbReference type="HAMAP-Rule" id="MF_00240"/>
    </source>
</evidence>
<feature type="signal peptide" evidence="1">
    <location>
        <begin position="1"/>
        <end position="25"/>
    </location>
</feature>
<feature type="chain" id="PRO_1000005708" description="Outer-membrane lipoprotein carrier protein">
    <location>
        <begin position="26"/>
        <end position="208"/>
    </location>
</feature>
<keyword id="KW-0143">Chaperone</keyword>
<keyword id="KW-0574">Periplasm</keyword>
<keyword id="KW-0653">Protein transport</keyword>
<keyword id="KW-0732">Signal</keyword>
<keyword id="KW-0813">Transport</keyword>
<comment type="function">
    <text evidence="1">Participates in the translocation of lipoproteins from the inner membrane to the outer membrane. Only forms a complex with a lipoprotein if the residue after the N-terminal Cys is not an aspartate (The Asp acts as a targeting signal to indicate that the lipoprotein should stay in the inner membrane).</text>
</comment>
<comment type="subunit">
    <text evidence="1">Monomer.</text>
</comment>
<comment type="subcellular location">
    <subcellularLocation>
        <location evidence="1">Periplasm</location>
    </subcellularLocation>
</comment>
<comment type="similarity">
    <text evidence="1">Belongs to the LolA family.</text>
</comment>
<organism>
    <name type="scientific">Vibrio campbellii (strain ATCC BAA-1116)</name>
    <dbReference type="NCBI Taxonomy" id="2902295"/>
    <lineage>
        <taxon>Bacteria</taxon>
        <taxon>Pseudomonadati</taxon>
        <taxon>Pseudomonadota</taxon>
        <taxon>Gammaproteobacteria</taxon>
        <taxon>Vibrionales</taxon>
        <taxon>Vibrionaceae</taxon>
        <taxon>Vibrio</taxon>
    </lineage>
</organism>
<name>LOLA_VIBC1</name>
<protein>
    <recommendedName>
        <fullName evidence="1">Outer-membrane lipoprotein carrier protein</fullName>
    </recommendedName>
</protein>
<proteinExistence type="inferred from homology"/>
<sequence>MKKLFSAKLFSALVLSFSLFSTAHAASPKDELNKRLSMNGGFSADFSQQVISPEGETVMEGEGTVEIARPSLFRWSTTSPDENLLVSDGKTLWYYSPFIEQVSIYWQEQATEQTPFVLLTRNRASDWDNYKISQKGDQFTLIPTAVDSTQGQFQINIDAKGVVKGFNVVEQDGQKGLFTFNNVKLGKPKADRFTFTIPNGVEVDDQRN</sequence>
<dbReference type="EMBL" id="CP000789">
    <property type="protein sequence ID" value="ABU70767.1"/>
    <property type="molecule type" value="Genomic_DNA"/>
</dbReference>
<dbReference type="RefSeq" id="WP_012127603.1">
    <property type="nucleotide sequence ID" value="NC_022269.1"/>
</dbReference>
<dbReference type="SMR" id="A7MSW6"/>
<dbReference type="KEGG" id="vha:VIBHAR_01798"/>
<dbReference type="PATRIC" id="fig|338187.25.peg.878"/>
<dbReference type="Proteomes" id="UP000008152">
    <property type="component" value="Chromosome I"/>
</dbReference>
<dbReference type="GO" id="GO:0030288">
    <property type="term" value="C:outer membrane-bounded periplasmic space"/>
    <property type="evidence" value="ECO:0007669"/>
    <property type="project" value="TreeGrafter"/>
</dbReference>
<dbReference type="GO" id="GO:0044874">
    <property type="term" value="P:lipoprotein localization to outer membrane"/>
    <property type="evidence" value="ECO:0007669"/>
    <property type="project" value="UniProtKB-UniRule"/>
</dbReference>
<dbReference type="GO" id="GO:0042953">
    <property type="term" value="P:lipoprotein transport"/>
    <property type="evidence" value="ECO:0007669"/>
    <property type="project" value="InterPro"/>
</dbReference>
<dbReference type="CDD" id="cd16325">
    <property type="entry name" value="LolA"/>
    <property type="match status" value="1"/>
</dbReference>
<dbReference type="Gene3D" id="2.50.20.10">
    <property type="entry name" value="Lipoprotein localisation LolA/LolB/LppX"/>
    <property type="match status" value="1"/>
</dbReference>
<dbReference type="HAMAP" id="MF_00240">
    <property type="entry name" value="LolA"/>
    <property type="match status" value="1"/>
</dbReference>
<dbReference type="InterPro" id="IPR029046">
    <property type="entry name" value="LolA/LolB/LppX"/>
</dbReference>
<dbReference type="InterPro" id="IPR004564">
    <property type="entry name" value="OM_lipoprot_carrier_LolA-like"/>
</dbReference>
<dbReference type="InterPro" id="IPR018323">
    <property type="entry name" value="OM_lipoprot_carrier_LolA_Pbac"/>
</dbReference>
<dbReference type="NCBIfam" id="TIGR00547">
    <property type="entry name" value="lolA"/>
    <property type="match status" value="1"/>
</dbReference>
<dbReference type="PANTHER" id="PTHR35869">
    <property type="entry name" value="OUTER-MEMBRANE LIPOPROTEIN CARRIER PROTEIN"/>
    <property type="match status" value="1"/>
</dbReference>
<dbReference type="PANTHER" id="PTHR35869:SF1">
    <property type="entry name" value="OUTER-MEMBRANE LIPOPROTEIN CARRIER PROTEIN"/>
    <property type="match status" value="1"/>
</dbReference>
<dbReference type="Pfam" id="PF03548">
    <property type="entry name" value="LolA"/>
    <property type="match status" value="1"/>
</dbReference>
<dbReference type="SUPFAM" id="SSF89392">
    <property type="entry name" value="Prokaryotic lipoproteins and lipoprotein localization factors"/>
    <property type="match status" value="1"/>
</dbReference>
<accession>A7MSW6</accession>